<name>OTC_THEFY</name>
<sequence>MAFNLRNRSFVKELDFTPQELMFLITLAADLKAAKYAGTEQPQLSGKNIALIFEKTSTRTRCAFEVAAHDQGAHVTYLDPSGSQIGHKESIKDTARVLGRMFDAIEYRGASQATVEELAEYAGVPVWNGLTDEWHPTQMLADFLTIMEHTDKPLREVTLAYMGDARNNLGNSLTVTGAMLGIDVRMVAPRELWPDEERVAAPARAIAETTGARVTFTDDIAEGLAGADFIYTDVWVSMGEPSEVWDERIRQLLPYQVNAEALKATGNPDVKFLHCLPAFHDLGTEVAREIHARTGLTALEVTDEVFESPASIVFDQAENRMHTIKALMVATLGR</sequence>
<gene>
    <name evidence="2" type="primary">argF</name>
    <name type="ordered locus">Tfu_1992</name>
</gene>
<reference key="1">
    <citation type="journal article" date="2007" name="J. Bacteriol.">
        <title>Genome sequence and analysis of the soil cellulolytic actinomycete Thermobifida fusca YX.</title>
        <authorList>
            <person name="Lykidis A."/>
            <person name="Mavromatis K."/>
            <person name="Ivanova N."/>
            <person name="Anderson I."/>
            <person name="Land M."/>
            <person name="DiBartolo G."/>
            <person name="Martinez M."/>
            <person name="Lapidus A."/>
            <person name="Lucas S."/>
            <person name="Copeland A."/>
            <person name="Richardson P."/>
            <person name="Wilson D.B."/>
            <person name="Kyrpides N."/>
        </authorList>
    </citation>
    <scope>NUCLEOTIDE SEQUENCE [LARGE SCALE GENOMIC DNA]</scope>
    <source>
        <strain>YX</strain>
    </source>
</reference>
<organism>
    <name type="scientific">Thermobifida fusca (strain YX)</name>
    <dbReference type="NCBI Taxonomy" id="269800"/>
    <lineage>
        <taxon>Bacteria</taxon>
        <taxon>Bacillati</taxon>
        <taxon>Actinomycetota</taxon>
        <taxon>Actinomycetes</taxon>
        <taxon>Streptosporangiales</taxon>
        <taxon>Nocardiopsidaceae</taxon>
        <taxon>Thermobifida</taxon>
    </lineage>
</organism>
<proteinExistence type="inferred from homology"/>
<protein>
    <recommendedName>
        <fullName evidence="2">Ornithine carbamoyltransferase</fullName>
        <shortName evidence="2">OTCase</shortName>
        <ecNumber evidence="2">2.1.3.3</ecNumber>
    </recommendedName>
</protein>
<comment type="function">
    <text evidence="1">Reversibly catalyzes the transfer of the carbamoyl group from carbamoyl phosphate (CP) to the N(epsilon) atom of ornithine (ORN) to produce L-citrulline.</text>
</comment>
<comment type="catalytic activity">
    <reaction evidence="2">
        <text>carbamoyl phosphate + L-ornithine = L-citrulline + phosphate + H(+)</text>
        <dbReference type="Rhea" id="RHEA:19513"/>
        <dbReference type="ChEBI" id="CHEBI:15378"/>
        <dbReference type="ChEBI" id="CHEBI:43474"/>
        <dbReference type="ChEBI" id="CHEBI:46911"/>
        <dbReference type="ChEBI" id="CHEBI:57743"/>
        <dbReference type="ChEBI" id="CHEBI:58228"/>
        <dbReference type="EC" id="2.1.3.3"/>
    </reaction>
</comment>
<comment type="pathway">
    <text evidence="2">Amino-acid biosynthesis; L-arginine biosynthesis; L-arginine from L-ornithine and carbamoyl phosphate: step 1/3.</text>
</comment>
<comment type="subcellular location">
    <subcellularLocation>
        <location evidence="2">Cytoplasm</location>
    </subcellularLocation>
</comment>
<comment type="similarity">
    <text evidence="2">Belongs to the aspartate/ornithine carbamoyltransferase superfamily. OTCase family.</text>
</comment>
<accession>Q47NE4</accession>
<evidence type="ECO:0000250" key="1"/>
<evidence type="ECO:0000255" key="2">
    <source>
        <dbReference type="HAMAP-Rule" id="MF_01109"/>
    </source>
</evidence>
<keyword id="KW-0028">Amino-acid biosynthesis</keyword>
<keyword id="KW-0055">Arginine biosynthesis</keyword>
<keyword id="KW-0963">Cytoplasm</keyword>
<keyword id="KW-0808">Transferase</keyword>
<dbReference type="EC" id="2.1.3.3" evidence="2"/>
<dbReference type="EMBL" id="CP000088">
    <property type="protein sequence ID" value="AAZ56025.1"/>
    <property type="molecule type" value="Genomic_DNA"/>
</dbReference>
<dbReference type="RefSeq" id="WP_011292415.1">
    <property type="nucleotide sequence ID" value="NC_007333.1"/>
</dbReference>
<dbReference type="SMR" id="Q47NE4"/>
<dbReference type="STRING" id="269800.Tfu_1992"/>
<dbReference type="KEGG" id="tfu:Tfu_1992"/>
<dbReference type="eggNOG" id="COG0078">
    <property type="taxonomic scope" value="Bacteria"/>
</dbReference>
<dbReference type="HOGENOM" id="CLU_043846_3_1_11"/>
<dbReference type="OrthoDB" id="9802587at2"/>
<dbReference type="UniPathway" id="UPA00068">
    <property type="reaction ID" value="UER00112"/>
</dbReference>
<dbReference type="GO" id="GO:0005737">
    <property type="term" value="C:cytoplasm"/>
    <property type="evidence" value="ECO:0007669"/>
    <property type="project" value="UniProtKB-SubCell"/>
</dbReference>
<dbReference type="GO" id="GO:0016597">
    <property type="term" value="F:amino acid binding"/>
    <property type="evidence" value="ECO:0007669"/>
    <property type="project" value="InterPro"/>
</dbReference>
<dbReference type="GO" id="GO:0004585">
    <property type="term" value="F:ornithine carbamoyltransferase activity"/>
    <property type="evidence" value="ECO:0007669"/>
    <property type="project" value="UniProtKB-UniRule"/>
</dbReference>
<dbReference type="GO" id="GO:0042450">
    <property type="term" value="P:arginine biosynthetic process via ornithine"/>
    <property type="evidence" value="ECO:0007669"/>
    <property type="project" value="TreeGrafter"/>
</dbReference>
<dbReference type="GO" id="GO:0019240">
    <property type="term" value="P:citrulline biosynthetic process"/>
    <property type="evidence" value="ECO:0007669"/>
    <property type="project" value="TreeGrafter"/>
</dbReference>
<dbReference type="GO" id="GO:0006526">
    <property type="term" value="P:L-arginine biosynthetic process"/>
    <property type="evidence" value="ECO:0007669"/>
    <property type="project" value="UniProtKB-UniPathway"/>
</dbReference>
<dbReference type="FunFam" id="3.40.50.1370:FF:000008">
    <property type="entry name" value="Ornithine carbamoyltransferase"/>
    <property type="match status" value="1"/>
</dbReference>
<dbReference type="Gene3D" id="3.40.50.1370">
    <property type="entry name" value="Aspartate/ornithine carbamoyltransferase"/>
    <property type="match status" value="2"/>
</dbReference>
<dbReference type="HAMAP" id="MF_01109">
    <property type="entry name" value="OTCase"/>
    <property type="match status" value="1"/>
</dbReference>
<dbReference type="InterPro" id="IPR006132">
    <property type="entry name" value="Asp/Orn_carbamoyltranf_P-bd"/>
</dbReference>
<dbReference type="InterPro" id="IPR006130">
    <property type="entry name" value="Asp/Orn_carbamoylTrfase"/>
</dbReference>
<dbReference type="InterPro" id="IPR036901">
    <property type="entry name" value="Asp/Orn_carbamoylTrfase_sf"/>
</dbReference>
<dbReference type="InterPro" id="IPR006131">
    <property type="entry name" value="Asp_carbamoyltransf_Asp/Orn-bd"/>
</dbReference>
<dbReference type="InterPro" id="IPR002292">
    <property type="entry name" value="Orn/put_carbamltrans"/>
</dbReference>
<dbReference type="InterPro" id="IPR024904">
    <property type="entry name" value="OTCase_ArgI"/>
</dbReference>
<dbReference type="NCBIfam" id="TIGR00658">
    <property type="entry name" value="orni_carb_tr"/>
    <property type="match status" value="1"/>
</dbReference>
<dbReference type="NCBIfam" id="NF001986">
    <property type="entry name" value="PRK00779.1"/>
    <property type="match status" value="1"/>
</dbReference>
<dbReference type="NCBIfam" id="NF003286">
    <property type="entry name" value="PRK04284.1"/>
    <property type="match status" value="1"/>
</dbReference>
<dbReference type="PANTHER" id="PTHR45753:SF2">
    <property type="entry name" value="ORNITHINE CARBAMOYLTRANSFERASE"/>
    <property type="match status" value="1"/>
</dbReference>
<dbReference type="PANTHER" id="PTHR45753">
    <property type="entry name" value="ORNITHINE CARBAMOYLTRANSFERASE, MITOCHONDRIAL"/>
    <property type="match status" value="1"/>
</dbReference>
<dbReference type="Pfam" id="PF00185">
    <property type="entry name" value="OTCace"/>
    <property type="match status" value="1"/>
</dbReference>
<dbReference type="Pfam" id="PF02729">
    <property type="entry name" value="OTCace_N"/>
    <property type="match status" value="1"/>
</dbReference>
<dbReference type="PRINTS" id="PR00100">
    <property type="entry name" value="AOTCASE"/>
</dbReference>
<dbReference type="PRINTS" id="PR00102">
    <property type="entry name" value="OTCASE"/>
</dbReference>
<dbReference type="SUPFAM" id="SSF53671">
    <property type="entry name" value="Aspartate/ornithine carbamoyltransferase"/>
    <property type="match status" value="1"/>
</dbReference>
<dbReference type="PROSITE" id="PS00097">
    <property type="entry name" value="CARBAMOYLTRANSFERASE"/>
    <property type="match status" value="1"/>
</dbReference>
<feature type="chain" id="PRO_1000065132" description="Ornithine carbamoyltransferase">
    <location>
        <begin position="1"/>
        <end position="334"/>
    </location>
</feature>
<feature type="binding site" evidence="2">
    <location>
        <begin position="57"/>
        <end position="60"/>
    </location>
    <ligand>
        <name>carbamoyl phosphate</name>
        <dbReference type="ChEBI" id="CHEBI:58228"/>
    </ligand>
</feature>
<feature type="binding site" evidence="2">
    <location>
        <position position="84"/>
    </location>
    <ligand>
        <name>carbamoyl phosphate</name>
        <dbReference type="ChEBI" id="CHEBI:58228"/>
    </ligand>
</feature>
<feature type="binding site" evidence="2">
    <location>
        <position position="108"/>
    </location>
    <ligand>
        <name>carbamoyl phosphate</name>
        <dbReference type="ChEBI" id="CHEBI:58228"/>
    </ligand>
</feature>
<feature type="binding site" evidence="2">
    <location>
        <begin position="135"/>
        <end position="138"/>
    </location>
    <ligand>
        <name>carbamoyl phosphate</name>
        <dbReference type="ChEBI" id="CHEBI:58228"/>
    </ligand>
</feature>
<feature type="binding site" evidence="2">
    <location>
        <position position="168"/>
    </location>
    <ligand>
        <name>L-ornithine</name>
        <dbReference type="ChEBI" id="CHEBI:46911"/>
    </ligand>
</feature>
<feature type="binding site" evidence="2">
    <location>
        <position position="233"/>
    </location>
    <ligand>
        <name>L-ornithine</name>
        <dbReference type="ChEBI" id="CHEBI:46911"/>
    </ligand>
</feature>
<feature type="binding site" evidence="2">
    <location>
        <begin position="237"/>
        <end position="238"/>
    </location>
    <ligand>
        <name>L-ornithine</name>
        <dbReference type="ChEBI" id="CHEBI:46911"/>
    </ligand>
</feature>
<feature type="binding site" evidence="2">
    <location>
        <begin position="275"/>
        <end position="276"/>
    </location>
    <ligand>
        <name>carbamoyl phosphate</name>
        <dbReference type="ChEBI" id="CHEBI:58228"/>
    </ligand>
</feature>
<feature type="binding site" evidence="2">
    <location>
        <position position="320"/>
    </location>
    <ligand>
        <name>carbamoyl phosphate</name>
        <dbReference type="ChEBI" id="CHEBI:58228"/>
    </ligand>
</feature>